<keyword id="KW-0067">ATP-binding</keyword>
<keyword id="KW-0963">Cytoplasm</keyword>
<keyword id="KW-0227">DNA damage</keyword>
<keyword id="KW-0233">DNA recombination</keyword>
<keyword id="KW-0234">DNA repair</keyword>
<keyword id="KW-0238">DNA-binding</keyword>
<keyword id="KW-0547">Nucleotide-binding</keyword>
<keyword id="KW-1185">Reference proteome</keyword>
<keyword id="KW-0742">SOS response</keyword>
<organism>
    <name type="scientific">Sulfurimonas denitrificans (strain ATCC 33889 / DSM 1251)</name>
    <name type="common">Thiomicrospira denitrificans (strain ATCC 33889 / DSM 1251)</name>
    <dbReference type="NCBI Taxonomy" id="326298"/>
    <lineage>
        <taxon>Bacteria</taxon>
        <taxon>Pseudomonadati</taxon>
        <taxon>Campylobacterota</taxon>
        <taxon>Epsilonproteobacteria</taxon>
        <taxon>Campylobacterales</taxon>
        <taxon>Sulfurimonadaceae</taxon>
        <taxon>Sulfurimonas</taxon>
    </lineage>
</organism>
<comment type="function">
    <text evidence="1">Can catalyze the hydrolysis of ATP in the presence of single-stranded DNA, the ATP-dependent uptake of single-stranded DNA by duplex DNA, and the ATP-dependent hybridization of homologous single-stranded DNAs. It interacts with LexA causing its activation and leading to its autocatalytic cleavage.</text>
</comment>
<comment type="subcellular location">
    <subcellularLocation>
        <location evidence="1">Cytoplasm</location>
    </subcellularLocation>
</comment>
<comment type="similarity">
    <text evidence="1">Belongs to the RecA family.</text>
</comment>
<reference key="1">
    <citation type="journal article" date="2008" name="Appl. Environ. Microbiol.">
        <title>Genome of the epsilonproteobacterial chemolithoautotroph Sulfurimonas denitrificans.</title>
        <authorList>
            <person name="Sievert S.M."/>
            <person name="Scott K.M."/>
            <person name="Klotz M.G."/>
            <person name="Chain P.S.G."/>
            <person name="Hauser L.J."/>
            <person name="Hemp J."/>
            <person name="Huegler M."/>
            <person name="Land M."/>
            <person name="Lapidus A."/>
            <person name="Larimer F.W."/>
            <person name="Lucas S."/>
            <person name="Malfatti S.A."/>
            <person name="Meyer F."/>
            <person name="Paulsen I.T."/>
            <person name="Ren Q."/>
            <person name="Simon J."/>
            <person name="Bailey K."/>
            <person name="Diaz E."/>
            <person name="Fitzpatrick K.A."/>
            <person name="Glover B."/>
            <person name="Gwatney N."/>
            <person name="Korajkic A."/>
            <person name="Long A."/>
            <person name="Mobberley J.M."/>
            <person name="Pantry S.N."/>
            <person name="Pazder G."/>
            <person name="Peterson S."/>
            <person name="Quintanilla J.D."/>
            <person name="Sprinkle R."/>
            <person name="Stephens J."/>
            <person name="Thomas P."/>
            <person name="Vaughn R."/>
            <person name="Weber M.J."/>
            <person name="Wooten L.L."/>
        </authorList>
    </citation>
    <scope>NUCLEOTIDE SEQUENCE [LARGE SCALE GENOMIC DNA]</scope>
    <source>
        <strain>ATCC 33889 / DSM 1251</strain>
    </source>
</reference>
<proteinExistence type="inferred from homology"/>
<dbReference type="EMBL" id="CP000153">
    <property type="protein sequence ID" value="ABB45276.1"/>
    <property type="molecule type" value="Genomic_DNA"/>
</dbReference>
<dbReference type="RefSeq" id="WP_011373616.1">
    <property type="nucleotide sequence ID" value="NC_007575.1"/>
</dbReference>
<dbReference type="SMR" id="Q30P05"/>
<dbReference type="STRING" id="326298.Suden_2002"/>
<dbReference type="KEGG" id="tdn:Suden_2002"/>
<dbReference type="eggNOG" id="COG0468">
    <property type="taxonomic scope" value="Bacteria"/>
</dbReference>
<dbReference type="HOGENOM" id="CLU_040469_3_2_7"/>
<dbReference type="OrthoDB" id="9776733at2"/>
<dbReference type="Proteomes" id="UP000002714">
    <property type="component" value="Chromosome"/>
</dbReference>
<dbReference type="GO" id="GO:0005829">
    <property type="term" value="C:cytosol"/>
    <property type="evidence" value="ECO:0007669"/>
    <property type="project" value="TreeGrafter"/>
</dbReference>
<dbReference type="GO" id="GO:0005524">
    <property type="term" value="F:ATP binding"/>
    <property type="evidence" value="ECO:0007669"/>
    <property type="project" value="UniProtKB-UniRule"/>
</dbReference>
<dbReference type="GO" id="GO:0016887">
    <property type="term" value="F:ATP hydrolysis activity"/>
    <property type="evidence" value="ECO:0007669"/>
    <property type="project" value="InterPro"/>
</dbReference>
<dbReference type="GO" id="GO:0140664">
    <property type="term" value="F:ATP-dependent DNA damage sensor activity"/>
    <property type="evidence" value="ECO:0007669"/>
    <property type="project" value="InterPro"/>
</dbReference>
<dbReference type="GO" id="GO:0003684">
    <property type="term" value="F:damaged DNA binding"/>
    <property type="evidence" value="ECO:0007669"/>
    <property type="project" value="UniProtKB-UniRule"/>
</dbReference>
<dbReference type="GO" id="GO:0003697">
    <property type="term" value="F:single-stranded DNA binding"/>
    <property type="evidence" value="ECO:0007669"/>
    <property type="project" value="UniProtKB-UniRule"/>
</dbReference>
<dbReference type="GO" id="GO:0006310">
    <property type="term" value="P:DNA recombination"/>
    <property type="evidence" value="ECO:0007669"/>
    <property type="project" value="UniProtKB-UniRule"/>
</dbReference>
<dbReference type="GO" id="GO:0006281">
    <property type="term" value="P:DNA repair"/>
    <property type="evidence" value="ECO:0007669"/>
    <property type="project" value="UniProtKB-UniRule"/>
</dbReference>
<dbReference type="GO" id="GO:0009432">
    <property type="term" value="P:SOS response"/>
    <property type="evidence" value="ECO:0007669"/>
    <property type="project" value="UniProtKB-UniRule"/>
</dbReference>
<dbReference type="CDD" id="cd00983">
    <property type="entry name" value="RecA"/>
    <property type="match status" value="1"/>
</dbReference>
<dbReference type="FunFam" id="3.40.50.300:FF:000087">
    <property type="entry name" value="Recombinase RecA"/>
    <property type="match status" value="1"/>
</dbReference>
<dbReference type="Gene3D" id="3.40.50.300">
    <property type="entry name" value="P-loop containing nucleotide triphosphate hydrolases"/>
    <property type="match status" value="1"/>
</dbReference>
<dbReference type="HAMAP" id="MF_00268">
    <property type="entry name" value="RecA"/>
    <property type="match status" value="1"/>
</dbReference>
<dbReference type="InterPro" id="IPR003593">
    <property type="entry name" value="AAA+_ATPase"/>
</dbReference>
<dbReference type="InterPro" id="IPR013765">
    <property type="entry name" value="DNA_recomb/repair_RecA"/>
</dbReference>
<dbReference type="InterPro" id="IPR020584">
    <property type="entry name" value="DNA_recomb/repair_RecA_CS"/>
</dbReference>
<dbReference type="InterPro" id="IPR027417">
    <property type="entry name" value="P-loop_NTPase"/>
</dbReference>
<dbReference type="InterPro" id="IPR049261">
    <property type="entry name" value="RecA-like_C"/>
</dbReference>
<dbReference type="InterPro" id="IPR049428">
    <property type="entry name" value="RecA-like_N"/>
</dbReference>
<dbReference type="InterPro" id="IPR020588">
    <property type="entry name" value="RecA_ATP-bd"/>
</dbReference>
<dbReference type="InterPro" id="IPR023400">
    <property type="entry name" value="RecA_C_sf"/>
</dbReference>
<dbReference type="InterPro" id="IPR020587">
    <property type="entry name" value="RecA_monomer-monomer_interface"/>
</dbReference>
<dbReference type="NCBIfam" id="TIGR02012">
    <property type="entry name" value="tigrfam_recA"/>
    <property type="match status" value="1"/>
</dbReference>
<dbReference type="PANTHER" id="PTHR45900:SF1">
    <property type="entry name" value="MITOCHONDRIAL DNA REPAIR PROTEIN RECA HOMOLOG-RELATED"/>
    <property type="match status" value="1"/>
</dbReference>
<dbReference type="PANTHER" id="PTHR45900">
    <property type="entry name" value="RECA"/>
    <property type="match status" value="1"/>
</dbReference>
<dbReference type="Pfam" id="PF00154">
    <property type="entry name" value="RecA"/>
    <property type="match status" value="1"/>
</dbReference>
<dbReference type="Pfam" id="PF21096">
    <property type="entry name" value="RecA_C"/>
    <property type="match status" value="1"/>
</dbReference>
<dbReference type="PRINTS" id="PR00142">
    <property type="entry name" value="RECA"/>
</dbReference>
<dbReference type="SMART" id="SM00382">
    <property type="entry name" value="AAA"/>
    <property type="match status" value="1"/>
</dbReference>
<dbReference type="SUPFAM" id="SSF52540">
    <property type="entry name" value="P-loop containing nucleoside triphosphate hydrolases"/>
    <property type="match status" value="1"/>
</dbReference>
<dbReference type="SUPFAM" id="SSF54752">
    <property type="entry name" value="RecA protein, C-terminal domain"/>
    <property type="match status" value="1"/>
</dbReference>
<dbReference type="PROSITE" id="PS00321">
    <property type="entry name" value="RECA_1"/>
    <property type="match status" value="1"/>
</dbReference>
<dbReference type="PROSITE" id="PS50162">
    <property type="entry name" value="RECA_2"/>
    <property type="match status" value="1"/>
</dbReference>
<dbReference type="PROSITE" id="PS50163">
    <property type="entry name" value="RECA_3"/>
    <property type="match status" value="1"/>
</dbReference>
<gene>
    <name evidence="1" type="primary">recA</name>
    <name type="ordered locus">Suden_2002</name>
</gene>
<protein>
    <recommendedName>
        <fullName evidence="1">Protein RecA</fullName>
    </recommendedName>
    <alternativeName>
        <fullName evidence="1">Recombinase A</fullName>
    </alternativeName>
</protein>
<name>RECA_SULDN</name>
<sequence>MDANKQKSLDLAMKQIDKAFGKGALMRLGDKEIMPIESISTGSLGLDLALGIGGIPQGRVVEIYGPESSGKTTLALQITAECQKAGGVCAFIDAEHALDVGYAKNLGVDVDNLLVSQPDYGEQALDIVETIARSGAIDLIVIDSVAALTPKSEIEGEMSDQNVGVQARLMSKALRKLTGILHKMNCTVIFINQIRMKIGMMGYGSPETTTGGNALKFYASVRIDVRRIASLKQGESQIGNRVKAKVIKNKVAPPFRQAEFDIMFGEGISKEGELVDYGVKLDIIDKSGAWFSYGETKLGQGRENVKAKFMEDKVLAHEIEEKIKAAMGLGDLMTMDSLDIEDVDL</sequence>
<accession>Q30P05</accession>
<evidence type="ECO:0000255" key="1">
    <source>
        <dbReference type="HAMAP-Rule" id="MF_00268"/>
    </source>
</evidence>
<feature type="chain" id="PRO_1000048030" description="Protein RecA">
    <location>
        <begin position="1"/>
        <end position="345"/>
    </location>
</feature>
<feature type="binding site" evidence="1">
    <location>
        <begin position="65"/>
        <end position="72"/>
    </location>
    <ligand>
        <name>ATP</name>
        <dbReference type="ChEBI" id="CHEBI:30616"/>
    </ligand>
</feature>